<evidence type="ECO:0000255" key="1">
    <source>
        <dbReference type="PROSITE-ProRule" id="PRU00057"/>
    </source>
</evidence>
<evidence type="ECO:0000255" key="2">
    <source>
        <dbReference type="PROSITE-ProRule" id="PRU00145"/>
    </source>
</evidence>
<evidence type="ECO:0000255" key="3">
    <source>
        <dbReference type="PROSITE-ProRule" id="PRU00159"/>
    </source>
</evidence>
<evidence type="ECO:0000255" key="4">
    <source>
        <dbReference type="PROSITE-ProRule" id="PRU10027"/>
    </source>
</evidence>
<evidence type="ECO:0000256" key="5">
    <source>
        <dbReference type="SAM" id="MobiDB-lite"/>
    </source>
</evidence>
<evidence type="ECO:0000305" key="6"/>
<evidence type="ECO:0007744" key="7">
    <source>
    </source>
</evidence>
<evidence type="ECO:0007744" key="8">
    <source>
    </source>
</evidence>
<evidence type="ECO:0007744" key="9">
    <source>
    </source>
</evidence>
<dbReference type="EC" id="2.7.11.1"/>
<dbReference type="EMBL" id="X82499">
    <property type="protein sequence ID" value="CAA57879.1"/>
    <property type="molecule type" value="Genomic_DNA"/>
</dbReference>
<dbReference type="EMBL" id="U23084">
    <property type="protein sequence ID" value="AAC49100.1"/>
    <property type="molecule type" value="Genomic_DNA"/>
</dbReference>
<dbReference type="EMBL" id="Z71574">
    <property type="protein sequence ID" value="CAA96216.1"/>
    <property type="molecule type" value="Genomic_DNA"/>
</dbReference>
<dbReference type="EMBL" id="BK006947">
    <property type="protein sequence ID" value="DAA10262.1"/>
    <property type="molecule type" value="Genomic_DNA"/>
</dbReference>
<dbReference type="PIR" id="S60402">
    <property type="entry name" value="S60402"/>
</dbReference>
<dbReference type="RefSeq" id="NP_014101.1">
    <property type="nucleotide sequence ID" value="NM_001183136.1"/>
</dbReference>
<dbReference type="SMR" id="P48562"/>
<dbReference type="BioGRID" id="35540">
    <property type="interactions" value="756"/>
</dbReference>
<dbReference type="ComplexPortal" id="CPX-3462">
    <property type="entry name" value="CLA4-BEM1-CDC24 polarity complex"/>
</dbReference>
<dbReference type="DIP" id="DIP-2276N"/>
<dbReference type="FunCoup" id="P48562">
    <property type="interactions" value="431"/>
</dbReference>
<dbReference type="IntAct" id="P48562">
    <property type="interactions" value="43"/>
</dbReference>
<dbReference type="MINT" id="P48562"/>
<dbReference type="STRING" id="4932.YNL298W"/>
<dbReference type="GlyGen" id="P48562">
    <property type="glycosylation" value="1 site, 1 O-linked glycan (1 site)"/>
</dbReference>
<dbReference type="iPTMnet" id="P48562"/>
<dbReference type="PaxDb" id="4932-YNL298W"/>
<dbReference type="PeptideAtlas" id="P48562"/>
<dbReference type="EnsemblFungi" id="YNL298W_mRNA">
    <property type="protein sequence ID" value="YNL298W"/>
    <property type="gene ID" value="YNL298W"/>
</dbReference>
<dbReference type="GeneID" id="855418"/>
<dbReference type="KEGG" id="sce:YNL298W"/>
<dbReference type="AGR" id="SGD:S000005242"/>
<dbReference type="SGD" id="S000005242">
    <property type="gene designation" value="CLA4"/>
</dbReference>
<dbReference type="VEuPathDB" id="FungiDB:YNL298W"/>
<dbReference type="eggNOG" id="KOG0578">
    <property type="taxonomic scope" value="Eukaryota"/>
</dbReference>
<dbReference type="GeneTree" id="ENSGT00940000176572"/>
<dbReference type="HOGENOM" id="CLU_000288_26_2_1"/>
<dbReference type="InParanoid" id="P48562"/>
<dbReference type="OMA" id="NFTHRVH"/>
<dbReference type="OrthoDB" id="248923at2759"/>
<dbReference type="BioCyc" id="YEAST:G3O-33286-MONOMER"/>
<dbReference type="BRENDA" id="2.7.11.1">
    <property type="organism ID" value="984"/>
</dbReference>
<dbReference type="Reactome" id="R-SCE-389359">
    <property type="pathway name" value="CD28 dependent Vav1 pathway"/>
</dbReference>
<dbReference type="Reactome" id="R-SCE-5627123">
    <property type="pathway name" value="RHO GTPases activate PAKs"/>
</dbReference>
<dbReference type="Reactome" id="R-SCE-5687128">
    <property type="pathway name" value="MAPK6/MAPK4 signaling"/>
</dbReference>
<dbReference type="Reactome" id="R-SCE-9013405">
    <property type="pathway name" value="RHOD GTPase cycle"/>
</dbReference>
<dbReference type="Reactome" id="R-SCE-9013406">
    <property type="pathway name" value="RHOQ GTPase cycle"/>
</dbReference>
<dbReference type="Reactome" id="R-SCE-9013420">
    <property type="pathway name" value="RHOU GTPase cycle"/>
</dbReference>
<dbReference type="Reactome" id="R-SCE-9013424">
    <property type="pathway name" value="RHOV GTPase cycle"/>
</dbReference>
<dbReference type="BioGRID-ORCS" id="855418">
    <property type="hits" value="3 hits in 13 CRISPR screens"/>
</dbReference>
<dbReference type="CD-CODE" id="E03F929F">
    <property type="entry name" value="Stress granule"/>
</dbReference>
<dbReference type="PRO" id="PR:P48562"/>
<dbReference type="Proteomes" id="UP000002311">
    <property type="component" value="Chromosome XIV"/>
</dbReference>
<dbReference type="RNAct" id="P48562">
    <property type="molecule type" value="protein"/>
</dbReference>
<dbReference type="GO" id="GO:0005933">
    <property type="term" value="C:cellular bud"/>
    <property type="evidence" value="ECO:0000314"/>
    <property type="project" value="SGD"/>
</dbReference>
<dbReference type="GO" id="GO:0005737">
    <property type="term" value="C:cytoplasm"/>
    <property type="evidence" value="ECO:0000318"/>
    <property type="project" value="GO_Central"/>
</dbReference>
<dbReference type="GO" id="GO:0000324">
    <property type="term" value="C:fungal-type vacuole"/>
    <property type="evidence" value="ECO:0000314"/>
    <property type="project" value="SGD"/>
</dbReference>
<dbReference type="GO" id="GO:0000131">
    <property type="term" value="C:incipient cellular bud site"/>
    <property type="evidence" value="ECO:0000303"/>
    <property type="project" value="ComplexPortal"/>
</dbReference>
<dbReference type="GO" id="GO:0005634">
    <property type="term" value="C:nucleus"/>
    <property type="evidence" value="ECO:0000315"/>
    <property type="project" value="SGD"/>
</dbReference>
<dbReference type="GO" id="GO:0120157">
    <property type="term" value="C:PAR polarity complex"/>
    <property type="evidence" value="ECO:0000353"/>
    <property type="project" value="ComplexPortal"/>
</dbReference>
<dbReference type="GO" id="GO:0005524">
    <property type="term" value="F:ATP binding"/>
    <property type="evidence" value="ECO:0007669"/>
    <property type="project" value="UniProtKB-KW"/>
</dbReference>
<dbReference type="GO" id="GO:0016301">
    <property type="term" value="F:kinase activity"/>
    <property type="evidence" value="ECO:0000314"/>
    <property type="project" value="SGD"/>
</dbReference>
<dbReference type="GO" id="GO:0004672">
    <property type="term" value="F:protein kinase activity"/>
    <property type="evidence" value="ECO:0007005"/>
    <property type="project" value="SGD"/>
</dbReference>
<dbReference type="GO" id="GO:0106310">
    <property type="term" value="F:protein serine kinase activity"/>
    <property type="evidence" value="ECO:0007669"/>
    <property type="project" value="RHEA"/>
</dbReference>
<dbReference type="GO" id="GO:0004674">
    <property type="term" value="F:protein serine/threonine kinase activity"/>
    <property type="evidence" value="ECO:0000314"/>
    <property type="project" value="SGD"/>
</dbReference>
<dbReference type="GO" id="GO:0000282">
    <property type="term" value="P:cellular bud site selection"/>
    <property type="evidence" value="ECO:0000303"/>
    <property type="project" value="ComplexPortal"/>
</dbReference>
<dbReference type="GO" id="GO:0009267">
    <property type="term" value="P:cellular response to starvation"/>
    <property type="evidence" value="ECO:0000318"/>
    <property type="project" value="GO_Central"/>
</dbReference>
<dbReference type="GO" id="GO:0035556">
    <property type="term" value="P:intracellular signal transduction"/>
    <property type="evidence" value="ECO:0000318"/>
    <property type="project" value="GO_Central"/>
</dbReference>
<dbReference type="GO" id="GO:0000278">
    <property type="term" value="P:mitotic cell cycle"/>
    <property type="evidence" value="ECO:0000314"/>
    <property type="project" value="SGD"/>
</dbReference>
<dbReference type="GO" id="GO:0010629">
    <property type="term" value="P:negative regulation of gene expression"/>
    <property type="evidence" value="ECO:0000315"/>
    <property type="project" value="SGD"/>
</dbReference>
<dbReference type="GO" id="GO:2000910">
    <property type="term" value="P:negative regulation of sterol import"/>
    <property type="evidence" value="ECO:0000315"/>
    <property type="project" value="SGD"/>
</dbReference>
<dbReference type="GO" id="GO:0000122">
    <property type="term" value="P:negative regulation of transcription by RNA polymerase II"/>
    <property type="evidence" value="ECO:0000315"/>
    <property type="project" value="SGD"/>
</dbReference>
<dbReference type="GO" id="GO:0042307">
    <property type="term" value="P:positive regulation of protein import into nucleus"/>
    <property type="evidence" value="ECO:0000315"/>
    <property type="project" value="SGD"/>
</dbReference>
<dbReference type="GO" id="GO:0007096">
    <property type="term" value="P:regulation of exit from mitosis"/>
    <property type="evidence" value="ECO:0000315"/>
    <property type="project" value="SGD"/>
</dbReference>
<dbReference type="GO" id="GO:0043408">
    <property type="term" value="P:regulation of MAPK cascade"/>
    <property type="evidence" value="ECO:0000318"/>
    <property type="project" value="GO_Central"/>
</dbReference>
<dbReference type="GO" id="GO:0035023">
    <property type="term" value="P:regulation of Rho protein signal transduction"/>
    <property type="evidence" value="ECO:0000303"/>
    <property type="project" value="ComplexPortal"/>
</dbReference>
<dbReference type="GO" id="GO:0019236">
    <property type="term" value="P:response to pheromone"/>
    <property type="evidence" value="ECO:0000316"/>
    <property type="project" value="SGD"/>
</dbReference>
<dbReference type="GO" id="GO:0031106">
    <property type="term" value="P:septin ring organization"/>
    <property type="evidence" value="ECO:0000315"/>
    <property type="project" value="SGD"/>
</dbReference>
<dbReference type="GO" id="GO:0035376">
    <property type="term" value="P:sterol import"/>
    <property type="evidence" value="ECO:0000315"/>
    <property type="project" value="SGD"/>
</dbReference>
<dbReference type="GO" id="GO:0000011">
    <property type="term" value="P:vacuole inheritance"/>
    <property type="evidence" value="ECO:0000315"/>
    <property type="project" value="SGD"/>
</dbReference>
<dbReference type="CDD" id="cd01093">
    <property type="entry name" value="CRIB_PAK_like"/>
    <property type="match status" value="1"/>
</dbReference>
<dbReference type="CDD" id="cd13279">
    <property type="entry name" value="PH_Cla4_Ste20"/>
    <property type="match status" value="1"/>
</dbReference>
<dbReference type="CDD" id="cd06614">
    <property type="entry name" value="STKc_PAK"/>
    <property type="match status" value="1"/>
</dbReference>
<dbReference type="FunFam" id="1.10.510.10:FF:000139">
    <property type="entry name" value="Non-specific serine/threonine protein kinase"/>
    <property type="match status" value="1"/>
</dbReference>
<dbReference type="FunFam" id="2.30.29.30:FF:000356">
    <property type="entry name" value="Non-specific serine/threonine protein kinase"/>
    <property type="match status" value="1"/>
</dbReference>
<dbReference type="FunFam" id="3.30.200.20:FF:000535">
    <property type="entry name" value="Non-specific serine/threonine protein kinase"/>
    <property type="match status" value="1"/>
</dbReference>
<dbReference type="FunFam" id="3.90.810.10:FF:000005">
    <property type="entry name" value="Non-specific serine/threonine protein kinase"/>
    <property type="match status" value="1"/>
</dbReference>
<dbReference type="Gene3D" id="3.90.810.10">
    <property type="entry name" value="CRIB domain"/>
    <property type="match status" value="1"/>
</dbReference>
<dbReference type="Gene3D" id="3.30.200.20">
    <property type="entry name" value="Phosphorylase Kinase, domain 1"/>
    <property type="match status" value="1"/>
</dbReference>
<dbReference type="Gene3D" id="2.30.29.30">
    <property type="entry name" value="Pleckstrin-homology domain (PH domain)/Phosphotyrosine-binding domain (PTB)"/>
    <property type="match status" value="1"/>
</dbReference>
<dbReference type="Gene3D" id="1.10.510.10">
    <property type="entry name" value="Transferase(Phosphotransferase) domain 1"/>
    <property type="match status" value="1"/>
</dbReference>
<dbReference type="InterPro" id="IPR000095">
    <property type="entry name" value="CRIB_dom"/>
</dbReference>
<dbReference type="InterPro" id="IPR036936">
    <property type="entry name" value="CRIB_dom_sf"/>
</dbReference>
<dbReference type="InterPro" id="IPR011009">
    <property type="entry name" value="Kinase-like_dom_sf"/>
</dbReference>
<dbReference type="InterPro" id="IPR051931">
    <property type="entry name" value="PAK3-like"/>
</dbReference>
<dbReference type="InterPro" id="IPR033923">
    <property type="entry name" value="PAK_BD"/>
</dbReference>
<dbReference type="InterPro" id="IPR011993">
    <property type="entry name" value="PH-like_dom_sf"/>
</dbReference>
<dbReference type="InterPro" id="IPR001849">
    <property type="entry name" value="PH_domain"/>
</dbReference>
<dbReference type="InterPro" id="IPR000719">
    <property type="entry name" value="Prot_kinase_dom"/>
</dbReference>
<dbReference type="InterPro" id="IPR008271">
    <property type="entry name" value="Ser/Thr_kinase_AS"/>
</dbReference>
<dbReference type="PANTHER" id="PTHR45832">
    <property type="entry name" value="SERINE/THREONINE-PROTEIN KINASE SAMKA-RELATED-RELATED"/>
    <property type="match status" value="1"/>
</dbReference>
<dbReference type="PANTHER" id="PTHR45832:SF22">
    <property type="entry name" value="SERINE_THREONINE-PROTEIN KINASE SAMKA-RELATED"/>
    <property type="match status" value="1"/>
</dbReference>
<dbReference type="Pfam" id="PF00786">
    <property type="entry name" value="PBD"/>
    <property type="match status" value="1"/>
</dbReference>
<dbReference type="Pfam" id="PF00169">
    <property type="entry name" value="PH"/>
    <property type="match status" value="1"/>
</dbReference>
<dbReference type="Pfam" id="PF00069">
    <property type="entry name" value="Pkinase"/>
    <property type="match status" value="1"/>
</dbReference>
<dbReference type="SMART" id="SM00285">
    <property type="entry name" value="PBD"/>
    <property type="match status" value="1"/>
</dbReference>
<dbReference type="SMART" id="SM00233">
    <property type="entry name" value="PH"/>
    <property type="match status" value="1"/>
</dbReference>
<dbReference type="SMART" id="SM00220">
    <property type="entry name" value="S_TKc"/>
    <property type="match status" value="1"/>
</dbReference>
<dbReference type="SUPFAM" id="SSF50729">
    <property type="entry name" value="PH domain-like"/>
    <property type="match status" value="1"/>
</dbReference>
<dbReference type="SUPFAM" id="SSF56112">
    <property type="entry name" value="Protein kinase-like (PK-like)"/>
    <property type="match status" value="1"/>
</dbReference>
<dbReference type="PROSITE" id="PS50108">
    <property type="entry name" value="CRIB"/>
    <property type="match status" value="1"/>
</dbReference>
<dbReference type="PROSITE" id="PS50003">
    <property type="entry name" value="PH_DOMAIN"/>
    <property type="match status" value="1"/>
</dbReference>
<dbReference type="PROSITE" id="PS50011">
    <property type="entry name" value="PROTEIN_KINASE_DOM"/>
    <property type="match status" value="1"/>
</dbReference>
<dbReference type="PROSITE" id="PS00108">
    <property type="entry name" value="PROTEIN_KINASE_ST"/>
    <property type="match status" value="1"/>
</dbReference>
<sequence>MSLSAAANKISDNDFQNIGPAPRPPSSNSQGRTCYNQTQPITKLMSQLDLTSASHLGTSTSKKKSGWVSYKDDGILSFIWQKRYLMLHDSYVALYKNDKQNDDAILKIPLTSIISVSRTQLKQYCFELVRCSDRNSVSSGSSSSLNVSSDSNSKKSIYIATKTESDLHSWLDAIFAKCPLLSGVSSPTNFTHKVHVGFDPETGSFVGMPTNWEKLLKHSRITGEDWNNNSAAVIQVLQFYQEYNGAGNPTNTLDKPQSGETSSSQKSLPNSYNDNKLRNNSVNSKSSSGVSSSMVSQRKTSQPPNTKSPVSLGSGSLPPINTKLPTSQSNIPRHLQNVPNQQYPKMRNGHSPTNGQFPRGPMHPNNSQRSLQQQQQQQQQQKQQHQQYPYHHQGPSPSPSPSPSPLNPYRPHHNMINPYSKQPQSPLSSQSTQNQAIPRYAQNSSPTAAHFQPQRTAPKPPISAPRAPYPSNQNATSNTHVQPVAPKNDQSTPQTMRQAPKRPDADVAQPGGVAKPKKPARPTMSTAEIMSKLKKVTVNADPSQCFKVIEKAGQGASGSVYLAERTHIPTESNMIELINNDIDEPHVGDKVAIKQMVLSKQPRKELIVNEILVMKDSRHKNIVNFLEAYLRTDDDLWVVMEFMEGGSLTDIIENSPTNDNSHSPLTEPQIAYIVRETCQGLKFLHDKHIIHRDIKSDNVLLDTRARVKITDFGFCARLTDKRSKRATMVGTPYWMAPEVVKQREYDEKIDVWSLGIMTIEMLEGEPPYLNEDPLKALYLIATNGTPKLKHPESLSLEIKRFLSVCLCVDVRYRASTEELLHHGFFNMACDPKDLTSLLEWKE</sequence>
<gene>
    <name type="primary">CLA4</name>
    <name type="ordered locus">YNL298W</name>
    <name type="ORF">N0450</name>
</gene>
<feature type="chain" id="PRO_0000085865" description="Serine/threonine-protein kinase CLA4">
    <location>
        <begin position="1"/>
        <end position="842"/>
    </location>
</feature>
<feature type="domain" description="PH" evidence="2">
    <location>
        <begin position="61"/>
        <end position="179"/>
    </location>
</feature>
<feature type="domain" description="CRIB" evidence="1">
    <location>
        <begin position="184"/>
        <end position="197"/>
    </location>
</feature>
<feature type="domain" description="Protein kinase" evidence="3">
    <location>
        <begin position="546"/>
        <end position="825"/>
    </location>
</feature>
<feature type="region of interest" description="Disordered" evidence="5">
    <location>
        <begin position="12"/>
        <end position="34"/>
    </location>
</feature>
<feature type="region of interest" description="Disordered" evidence="5">
    <location>
        <begin position="247"/>
        <end position="524"/>
    </location>
</feature>
<feature type="compositionally biased region" description="Polar residues" evidence="5">
    <location>
        <begin position="247"/>
        <end position="274"/>
    </location>
</feature>
<feature type="compositionally biased region" description="Low complexity" evidence="5">
    <location>
        <begin position="279"/>
        <end position="296"/>
    </location>
</feature>
<feature type="compositionally biased region" description="Polar residues" evidence="5">
    <location>
        <begin position="297"/>
        <end position="307"/>
    </location>
</feature>
<feature type="compositionally biased region" description="Low complexity" evidence="5">
    <location>
        <begin position="308"/>
        <end position="319"/>
    </location>
</feature>
<feature type="compositionally biased region" description="Polar residues" evidence="5">
    <location>
        <begin position="323"/>
        <end position="343"/>
    </location>
</feature>
<feature type="compositionally biased region" description="Low complexity" evidence="5">
    <location>
        <begin position="372"/>
        <end position="387"/>
    </location>
</feature>
<feature type="compositionally biased region" description="Pro residues" evidence="5">
    <location>
        <begin position="396"/>
        <end position="408"/>
    </location>
</feature>
<feature type="compositionally biased region" description="Low complexity" evidence="5">
    <location>
        <begin position="418"/>
        <end position="435"/>
    </location>
</feature>
<feature type="compositionally biased region" description="Polar residues" evidence="5">
    <location>
        <begin position="470"/>
        <end position="481"/>
    </location>
</feature>
<feature type="compositionally biased region" description="Polar residues" evidence="5">
    <location>
        <begin position="488"/>
        <end position="497"/>
    </location>
</feature>
<feature type="active site" description="Proton acceptor" evidence="3 4">
    <location>
        <position position="693"/>
    </location>
</feature>
<feature type="binding site" evidence="3">
    <location>
        <begin position="552"/>
        <end position="560"/>
    </location>
    <ligand>
        <name>ATP</name>
        <dbReference type="ChEBI" id="CHEBI:30616"/>
    </ligand>
</feature>
<feature type="binding site" evidence="3">
    <location>
        <position position="594"/>
    </location>
    <ligand>
        <name>ATP</name>
        <dbReference type="ChEBI" id="CHEBI:30616"/>
    </ligand>
</feature>
<feature type="modified residue" description="Phosphoserine" evidence="9">
    <location>
        <position position="29"/>
    </location>
</feature>
<feature type="modified residue" description="Phosphoserine" evidence="8">
    <location>
        <position position="46"/>
    </location>
</feature>
<feature type="modified residue" description="Phosphoserine" evidence="7 9">
    <location>
        <position position="351"/>
    </location>
</feature>
<feature type="modified residue" description="Phosphoserine" evidence="9">
    <location>
        <position position="367"/>
    </location>
</feature>
<feature type="modified residue" description="Phosphoserine" evidence="8">
    <location>
        <position position="425"/>
    </location>
</feature>
<feature type="sequence conflict" description="In Ref. 1; CAA57879." evidence="6" ref="1">
    <original>Y</original>
    <variation>I</variation>
    <location>
        <position position="390"/>
    </location>
</feature>
<accession>P48562</accession>
<accession>D6W0P6</accession>
<organism>
    <name type="scientific">Saccharomyces cerevisiae (strain ATCC 204508 / S288c)</name>
    <name type="common">Baker's yeast</name>
    <dbReference type="NCBI Taxonomy" id="559292"/>
    <lineage>
        <taxon>Eukaryota</taxon>
        <taxon>Fungi</taxon>
        <taxon>Dikarya</taxon>
        <taxon>Ascomycota</taxon>
        <taxon>Saccharomycotina</taxon>
        <taxon>Saccharomycetes</taxon>
        <taxon>Saccharomycetales</taxon>
        <taxon>Saccharomycetaceae</taxon>
        <taxon>Saccharomyces</taxon>
    </lineage>
</organism>
<proteinExistence type="evidence at protein level"/>
<comment type="function">
    <text>Involved in budding and cytokinesis.</text>
</comment>
<comment type="catalytic activity">
    <reaction>
        <text>L-seryl-[protein] + ATP = O-phospho-L-seryl-[protein] + ADP + H(+)</text>
        <dbReference type="Rhea" id="RHEA:17989"/>
        <dbReference type="Rhea" id="RHEA-COMP:9863"/>
        <dbReference type="Rhea" id="RHEA-COMP:11604"/>
        <dbReference type="ChEBI" id="CHEBI:15378"/>
        <dbReference type="ChEBI" id="CHEBI:29999"/>
        <dbReference type="ChEBI" id="CHEBI:30616"/>
        <dbReference type="ChEBI" id="CHEBI:83421"/>
        <dbReference type="ChEBI" id="CHEBI:456216"/>
        <dbReference type="EC" id="2.7.11.1"/>
    </reaction>
</comment>
<comment type="catalytic activity">
    <reaction>
        <text>L-threonyl-[protein] + ATP = O-phospho-L-threonyl-[protein] + ADP + H(+)</text>
        <dbReference type="Rhea" id="RHEA:46608"/>
        <dbReference type="Rhea" id="RHEA-COMP:11060"/>
        <dbReference type="Rhea" id="RHEA-COMP:11605"/>
        <dbReference type="ChEBI" id="CHEBI:15378"/>
        <dbReference type="ChEBI" id="CHEBI:30013"/>
        <dbReference type="ChEBI" id="CHEBI:30616"/>
        <dbReference type="ChEBI" id="CHEBI:61977"/>
        <dbReference type="ChEBI" id="CHEBI:456216"/>
        <dbReference type="EC" id="2.7.11.1"/>
    </reaction>
</comment>
<comment type="subunit">
    <text>Interacts with CDC42.</text>
</comment>
<comment type="interaction">
    <interactant intactId="EBI-4750">
        <id>P48562</id>
    </interactant>
    <interactant intactId="EBI-3508">
        <id>P29366</id>
        <label>BEM1</label>
    </interactant>
    <organismsDiffer>false</organismsDiffer>
    <experiments>9</experiments>
</comment>
<comment type="interaction">
    <interactant intactId="EBI-4750">
        <id>P48562</id>
    </interactant>
    <interactant intactId="EBI-4220">
        <id>P11433</id>
        <label>CDC24</label>
    </interactant>
    <organismsDiffer>false</organismsDiffer>
    <experiments>5</experiments>
</comment>
<comment type="interaction">
    <interactant intactId="EBI-4750">
        <id>P48562</id>
    </interactant>
    <interactant intactId="EBI-11687">
        <id>Q04439</id>
        <label>MYO5</label>
    </interactant>
    <organismsDiffer>false</organismsDiffer>
    <experiments>3</experiments>
</comment>
<comment type="interaction">
    <interactant intactId="EBI-4750">
        <id>P48562</id>
    </interactant>
    <interactant intactId="EBI-34713">
        <id>Q12163</id>
        <label>NBP2</label>
    </interactant>
    <organismsDiffer>false</organismsDiffer>
    <experiments>3</experiments>
</comment>
<comment type="similarity">
    <text evidence="6">Belongs to the protein kinase superfamily. STE Ser/Thr protein kinase family. STE20 subfamily.</text>
</comment>
<reference key="1">
    <citation type="journal article" date="1995" name="Genes Dev.">
        <title>Ste20-like protein kinases are required for normal localization of cell growth and for cytokinesis in budding yeast.</title>
        <authorList>
            <person name="Cvrckova F."/>
            <person name="de Virgilio C."/>
            <person name="Manser E."/>
            <person name="Pringle J.R."/>
            <person name="Nasmyth K."/>
        </authorList>
    </citation>
    <scope>NUCLEOTIDE SEQUENCE [GENOMIC DNA]</scope>
    <source>
        <strain>K1107</strain>
    </source>
</reference>
<reference key="2">
    <citation type="journal article" date="1995" name="Yeast">
        <title>Sequence analysis of a 30 kb DNA segment from yeast chromosome XIV carrying a ribosomal protein gene cluster, the genes encoding a plasma membrane protein and a subunit of replication factor C, and a novel putative serine/threonine protein kinase gene.</title>
        <authorList>
            <person name="Maurer K.C.T."/>
            <person name="Urbanus J.H.M."/>
            <person name="Planta R.J."/>
        </authorList>
    </citation>
    <scope>NUCLEOTIDE SEQUENCE [GENOMIC DNA]</scope>
    <source>
        <strain>ATCC 96604 / S288c / FY1679</strain>
    </source>
</reference>
<reference key="3">
    <citation type="journal article" date="1997" name="Nature">
        <title>The nucleotide sequence of Saccharomyces cerevisiae chromosome XIV and its evolutionary implications.</title>
        <authorList>
            <person name="Philippsen P."/>
            <person name="Kleine K."/>
            <person name="Poehlmann R."/>
            <person name="Duesterhoeft A."/>
            <person name="Hamberg K."/>
            <person name="Hegemann J.H."/>
            <person name="Obermaier B."/>
            <person name="Urrestarazu L.A."/>
            <person name="Aert R."/>
            <person name="Albermann K."/>
            <person name="Altmann R."/>
            <person name="Andre B."/>
            <person name="Baladron V."/>
            <person name="Ballesta J.P.G."/>
            <person name="Becam A.-M."/>
            <person name="Beinhauer J.D."/>
            <person name="Boskovic J."/>
            <person name="Buitrago M.J."/>
            <person name="Bussereau F."/>
            <person name="Coster F."/>
            <person name="Crouzet M."/>
            <person name="D'Angelo M."/>
            <person name="Dal Pero F."/>
            <person name="De Antoni A."/>
            <person name="del Rey F."/>
            <person name="Doignon F."/>
            <person name="Domdey H."/>
            <person name="Dubois E."/>
            <person name="Fiedler T.A."/>
            <person name="Fleig U."/>
            <person name="Floeth M."/>
            <person name="Fritz C."/>
            <person name="Gaillardin C."/>
            <person name="Garcia-Cantalejo J.M."/>
            <person name="Glansdorff N."/>
            <person name="Goffeau A."/>
            <person name="Gueldener U."/>
            <person name="Herbert C.J."/>
            <person name="Heumann K."/>
            <person name="Heuss-Neitzel D."/>
            <person name="Hilbert H."/>
            <person name="Hinni K."/>
            <person name="Iraqui Houssaini I."/>
            <person name="Jacquet M."/>
            <person name="Jimenez A."/>
            <person name="Jonniaux J.-L."/>
            <person name="Karpfinger-Hartl L."/>
            <person name="Lanfranchi G."/>
            <person name="Lepingle A."/>
            <person name="Levesque H."/>
            <person name="Lyck R."/>
            <person name="Maftahi M."/>
            <person name="Mallet L."/>
            <person name="Maurer C.T.C."/>
            <person name="Messenguy F."/>
            <person name="Mewes H.-W."/>
            <person name="Moestl D."/>
            <person name="Nasr F."/>
            <person name="Nicaud J.-M."/>
            <person name="Niedenthal R.K."/>
            <person name="Pandolfo D."/>
            <person name="Pierard A."/>
            <person name="Piravandi E."/>
            <person name="Planta R.J."/>
            <person name="Pohl T.M."/>
            <person name="Purnelle B."/>
            <person name="Rebischung C."/>
            <person name="Remacha M.A."/>
            <person name="Revuelta J.L."/>
            <person name="Rinke M."/>
            <person name="Saiz J.E."/>
            <person name="Sartorello F."/>
            <person name="Scherens B."/>
            <person name="Sen-Gupta M."/>
            <person name="Soler-Mira A."/>
            <person name="Urbanus J.H.M."/>
            <person name="Valle G."/>
            <person name="Van Dyck L."/>
            <person name="Verhasselt P."/>
            <person name="Vierendeels F."/>
            <person name="Vissers S."/>
            <person name="Voet M."/>
            <person name="Volckaert G."/>
            <person name="Wach A."/>
            <person name="Wambutt R."/>
            <person name="Wedler H."/>
            <person name="Zollner A."/>
            <person name="Hani J."/>
        </authorList>
    </citation>
    <scope>NUCLEOTIDE SEQUENCE [LARGE SCALE GENOMIC DNA]</scope>
    <source>
        <strain>ATCC 204508 / S288c</strain>
    </source>
</reference>
<reference key="4">
    <citation type="journal article" date="2014" name="G3 (Bethesda)">
        <title>The reference genome sequence of Saccharomyces cerevisiae: Then and now.</title>
        <authorList>
            <person name="Engel S.R."/>
            <person name="Dietrich F.S."/>
            <person name="Fisk D.G."/>
            <person name="Binkley G."/>
            <person name="Balakrishnan R."/>
            <person name="Costanzo M.C."/>
            <person name="Dwight S.S."/>
            <person name="Hitz B.C."/>
            <person name="Karra K."/>
            <person name="Nash R.S."/>
            <person name="Weng S."/>
            <person name="Wong E.D."/>
            <person name="Lloyd P."/>
            <person name="Skrzypek M.S."/>
            <person name="Miyasato S.R."/>
            <person name="Simison M."/>
            <person name="Cherry J.M."/>
        </authorList>
    </citation>
    <scope>GENOME REANNOTATION</scope>
    <source>
        <strain>ATCC 204508 / S288c</strain>
    </source>
</reference>
<reference key="5">
    <citation type="journal article" date="2007" name="J. Proteome Res.">
        <title>Large-scale phosphorylation analysis of alpha-factor-arrested Saccharomyces cerevisiae.</title>
        <authorList>
            <person name="Li X."/>
            <person name="Gerber S.A."/>
            <person name="Rudner A.D."/>
            <person name="Beausoleil S.A."/>
            <person name="Haas W."/>
            <person name="Villen J."/>
            <person name="Elias J.E."/>
            <person name="Gygi S.P."/>
        </authorList>
    </citation>
    <scope>PHOSPHORYLATION [LARGE SCALE ANALYSIS] AT SER-351</scope>
    <scope>IDENTIFICATION BY MASS SPECTROMETRY [LARGE SCALE ANALYSIS]</scope>
    <source>
        <strain>ADR376</strain>
    </source>
</reference>
<reference key="6">
    <citation type="journal article" date="2008" name="Mol. Cell. Proteomics">
        <title>A multidimensional chromatography technology for in-depth phosphoproteome analysis.</title>
        <authorList>
            <person name="Albuquerque C.P."/>
            <person name="Smolka M.B."/>
            <person name="Payne S.H."/>
            <person name="Bafna V."/>
            <person name="Eng J."/>
            <person name="Zhou H."/>
        </authorList>
    </citation>
    <scope>PHOSPHORYLATION [LARGE SCALE ANALYSIS] AT SER-46 AND SER-425</scope>
    <scope>IDENTIFICATION BY MASS SPECTROMETRY [LARGE SCALE ANALYSIS]</scope>
</reference>
<reference key="7">
    <citation type="journal article" date="2009" name="Science">
        <title>Global analysis of Cdk1 substrate phosphorylation sites provides insights into evolution.</title>
        <authorList>
            <person name="Holt L.J."/>
            <person name="Tuch B.B."/>
            <person name="Villen J."/>
            <person name="Johnson A.D."/>
            <person name="Gygi S.P."/>
            <person name="Morgan D.O."/>
        </authorList>
    </citation>
    <scope>PHOSPHORYLATION [LARGE SCALE ANALYSIS] AT SER-29; SER-351 AND SER-367</scope>
    <scope>IDENTIFICATION BY MASS SPECTROMETRY [LARGE SCALE ANALYSIS]</scope>
</reference>
<protein>
    <recommendedName>
        <fullName>Serine/threonine-protein kinase CLA4</fullName>
        <ecNumber>2.7.11.1</ecNumber>
    </recommendedName>
</protein>
<name>CLA4_YEAST</name>
<keyword id="KW-0067">ATP-binding</keyword>
<keyword id="KW-0418">Kinase</keyword>
<keyword id="KW-0547">Nucleotide-binding</keyword>
<keyword id="KW-0597">Phosphoprotein</keyword>
<keyword id="KW-1185">Reference proteome</keyword>
<keyword id="KW-0723">Serine/threonine-protein kinase</keyword>
<keyword id="KW-0808">Transferase</keyword>